<evidence type="ECO:0000255" key="1">
    <source>
        <dbReference type="HAMAP-Rule" id="MF_00160"/>
    </source>
</evidence>
<evidence type="ECO:0000305" key="2"/>
<reference key="1">
    <citation type="journal article" date="2003" name="Genome Res.">
        <title>Comparative genome analysis of Vibrio vulnificus, a marine pathogen.</title>
        <authorList>
            <person name="Chen C.-Y."/>
            <person name="Wu K.-M."/>
            <person name="Chang Y.-C."/>
            <person name="Chang C.-H."/>
            <person name="Tsai H.-C."/>
            <person name="Liao T.-L."/>
            <person name="Liu Y.-M."/>
            <person name="Chen H.-J."/>
            <person name="Shen A.B.-T."/>
            <person name="Li J.-C."/>
            <person name="Su T.-L."/>
            <person name="Shao C.-P."/>
            <person name="Lee C.-T."/>
            <person name="Hor L.-I."/>
            <person name="Tsai S.-F."/>
        </authorList>
    </citation>
    <scope>NUCLEOTIDE SEQUENCE [LARGE SCALE GENOMIC DNA]</scope>
    <source>
        <strain>YJ016</strain>
    </source>
</reference>
<gene>
    <name evidence="1" type="primary">serC</name>
    <name type="ordered locus">VV1451</name>
</gene>
<feature type="chain" id="PRO_0000150218" description="Phosphoserine aminotransferase">
    <location>
        <begin position="1"/>
        <end position="364"/>
    </location>
</feature>
<feature type="binding site" evidence="1">
    <location>
        <position position="46"/>
    </location>
    <ligand>
        <name>L-glutamate</name>
        <dbReference type="ChEBI" id="CHEBI:29985"/>
    </ligand>
</feature>
<feature type="binding site" evidence="1">
    <location>
        <begin position="80"/>
        <end position="81"/>
    </location>
    <ligand>
        <name>pyridoxal 5'-phosphate</name>
        <dbReference type="ChEBI" id="CHEBI:597326"/>
    </ligand>
</feature>
<feature type="binding site" evidence="1">
    <location>
        <position position="106"/>
    </location>
    <ligand>
        <name>pyridoxal 5'-phosphate</name>
        <dbReference type="ChEBI" id="CHEBI:597326"/>
    </ligand>
</feature>
<feature type="binding site" evidence="1">
    <location>
        <position position="157"/>
    </location>
    <ligand>
        <name>pyridoxal 5'-phosphate</name>
        <dbReference type="ChEBI" id="CHEBI:597326"/>
    </ligand>
</feature>
<feature type="binding site" evidence="1">
    <location>
        <position position="176"/>
    </location>
    <ligand>
        <name>pyridoxal 5'-phosphate</name>
        <dbReference type="ChEBI" id="CHEBI:597326"/>
    </ligand>
</feature>
<feature type="binding site" evidence="1">
    <location>
        <position position="199"/>
    </location>
    <ligand>
        <name>pyridoxal 5'-phosphate</name>
        <dbReference type="ChEBI" id="CHEBI:597326"/>
    </ligand>
</feature>
<feature type="binding site" evidence="1">
    <location>
        <begin position="241"/>
        <end position="242"/>
    </location>
    <ligand>
        <name>pyridoxal 5'-phosphate</name>
        <dbReference type="ChEBI" id="CHEBI:597326"/>
    </ligand>
</feature>
<feature type="modified residue" description="N6-(pyridoxal phosphate)lysine" evidence="1">
    <location>
        <position position="200"/>
    </location>
</feature>
<keyword id="KW-0028">Amino-acid biosynthesis</keyword>
<keyword id="KW-0032">Aminotransferase</keyword>
<keyword id="KW-0963">Cytoplasm</keyword>
<keyword id="KW-0663">Pyridoxal phosphate</keyword>
<keyword id="KW-0664">Pyridoxine biosynthesis</keyword>
<keyword id="KW-0718">Serine biosynthesis</keyword>
<keyword id="KW-0808">Transferase</keyword>
<sequence length="364" mass="40266">MEQNTDNVFNFSAGPAALPKPVMQQAQQELLNWQGLGTSVMEISHRSKEFIAVAEQSEQDLRDLLNIPDNYKVLFCQGGARAQFAAVPLNLLGDATTATYIDAGYWAESAVEEAKKYCQPDVFVAKAEKDGKQAVLPASEWQIHPDAAYVHFCPNETIDGIEINDLPVTDKPIVADMSSTILSREIDVSKYGVIYAGAQKNIGPSGIAIAIVRDDLLGLAKEVLPSILNYKVLAEQDSMFNTPPTFAWYLSGLVFKWLKAQGGVKAIEQVNREKAAILYNYIDESDFYINNVHPDNRSLMNVPFQMVKPELDAKFLKEAEALGLKSLKGHRVVGGMRASIYNAMPIEGVKALVDFMRQFEQENA</sequence>
<name>SERC_VIBVY</name>
<protein>
    <recommendedName>
        <fullName evidence="1">Phosphoserine aminotransferase</fullName>
        <ecNumber evidence="1">2.6.1.52</ecNumber>
    </recommendedName>
    <alternativeName>
        <fullName evidence="1">Phosphohydroxythreonine aminotransferase</fullName>
        <shortName evidence="1">PSAT</shortName>
    </alternativeName>
</protein>
<comment type="function">
    <text evidence="1">Catalyzes the reversible conversion of 3-phosphohydroxypyruvate to phosphoserine and of 3-hydroxy-2-oxo-4-phosphonooxybutanoate to phosphohydroxythreonine.</text>
</comment>
<comment type="catalytic activity">
    <reaction evidence="1">
        <text>O-phospho-L-serine + 2-oxoglutarate = 3-phosphooxypyruvate + L-glutamate</text>
        <dbReference type="Rhea" id="RHEA:14329"/>
        <dbReference type="ChEBI" id="CHEBI:16810"/>
        <dbReference type="ChEBI" id="CHEBI:18110"/>
        <dbReference type="ChEBI" id="CHEBI:29985"/>
        <dbReference type="ChEBI" id="CHEBI:57524"/>
        <dbReference type="EC" id="2.6.1.52"/>
    </reaction>
</comment>
<comment type="catalytic activity">
    <reaction evidence="1">
        <text>4-(phosphooxy)-L-threonine + 2-oxoglutarate = (R)-3-hydroxy-2-oxo-4-phosphooxybutanoate + L-glutamate</text>
        <dbReference type="Rhea" id="RHEA:16573"/>
        <dbReference type="ChEBI" id="CHEBI:16810"/>
        <dbReference type="ChEBI" id="CHEBI:29985"/>
        <dbReference type="ChEBI" id="CHEBI:58452"/>
        <dbReference type="ChEBI" id="CHEBI:58538"/>
        <dbReference type="EC" id="2.6.1.52"/>
    </reaction>
</comment>
<comment type="cofactor">
    <cofactor evidence="1">
        <name>pyridoxal 5'-phosphate</name>
        <dbReference type="ChEBI" id="CHEBI:597326"/>
    </cofactor>
    <text evidence="1">Binds 1 pyridoxal phosphate per subunit.</text>
</comment>
<comment type="pathway">
    <text evidence="1">Amino-acid biosynthesis; L-serine biosynthesis; L-serine from 3-phospho-D-glycerate: step 2/3.</text>
</comment>
<comment type="pathway">
    <text evidence="1">Cofactor biosynthesis; pyridoxine 5'-phosphate biosynthesis; pyridoxine 5'-phosphate from D-erythrose 4-phosphate: step 3/5.</text>
</comment>
<comment type="subunit">
    <text evidence="1">Homodimer.</text>
</comment>
<comment type="subcellular location">
    <subcellularLocation>
        <location evidence="1">Cytoplasm</location>
    </subcellularLocation>
</comment>
<comment type="similarity">
    <text evidence="1">Belongs to the class-V pyridoxal-phosphate-dependent aminotransferase family. SerC subfamily.</text>
</comment>
<comment type="sequence caution" evidence="2">
    <conflict type="erroneous initiation">
        <sequence resource="EMBL-CDS" id="BAC94215"/>
    </conflict>
</comment>
<organism>
    <name type="scientific">Vibrio vulnificus (strain YJ016)</name>
    <dbReference type="NCBI Taxonomy" id="196600"/>
    <lineage>
        <taxon>Bacteria</taxon>
        <taxon>Pseudomonadati</taxon>
        <taxon>Pseudomonadota</taxon>
        <taxon>Gammaproteobacteria</taxon>
        <taxon>Vibrionales</taxon>
        <taxon>Vibrionaceae</taxon>
        <taxon>Vibrio</taxon>
    </lineage>
</organism>
<proteinExistence type="inferred from homology"/>
<accession>Q7MLH6</accession>
<dbReference type="EC" id="2.6.1.52" evidence="1"/>
<dbReference type="EMBL" id="BA000037">
    <property type="protein sequence ID" value="BAC94215.1"/>
    <property type="status" value="ALT_INIT"/>
    <property type="molecule type" value="Genomic_DNA"/>
</dbReference>
<dbReference type="RefSeq" id="WP_013571959.1">
    <property type="nucleotide sequence ID" value="NC_005139.1"/>
</dbReference>
<dbReference type="SMR" id="Q7MLH6"/>
<dbReference type="STRING" id="672.VV93_v1c13630"/>
<dbReference type="KEGG" id="vvy:VV1451"/>
<dbReference type="PATRIC" id="fig|196600.6.peg.1439"/>
<dbReference type="eggNOG" id="COG1932">
    <property type="taxonomic scope" value="Bacteria"/>
</dbReference>
<dbReference type="HOGENOM" id="CLU_034866_0_2_6"/>
<dbReference type="UniPathway" id="UPA00135">
    <property type="reaction ID" value="UER00197"/>
</dbReference>
<dbReference type="UniPathway" id="UPA00244">
    <property type="reaction ID" value="UER00311"/>
</dbReference>
<dbReference type="Proteomes" id="UP000002675">
    <property type="component" value="Chromosome I"/>
</dbReference>
<dbReference type="GO" id="GO:0005737">
    <property type="term" value="C:cytoplasm"/>
    <property type="evidence" value="ECO:0007669"/>
    <property type="project" value="UniProtKB-SubCell"/>
</dbReference>
<dbReference type="GO" id="GO:0004648">
    <property type="term" value="F:O-phospho-L-serine:2-oxoglutarate aminotransferase activity"/>
    <property type="evidence" value="ECO:0007669"/>
    <property type="project" value="UniProtKB-UniRule"/>
</dbReference>
<dbReference type="GO" id="GO:0030170">
    <property type="term" value="F:pyridoxal phosphate binding"/>
    <property type="evidence" value="ECO:0007669"/>
    <property type="project" value="UniProtKB-UniRule"/>
</dbReference>
<dbReference type="GO" id="GO:0006564">
    <property type="term" value="P:L-serine biosynthetic process"/>
    <property type="evidence" value="ECO:0007669"/>
    <property type="project" value="UniProtKB-UniRule"/>
</dbReference>
<dbReference type="GO" id="GO:0008615">
    <property type="term" value="P:pyridoxine biosynthetic process"/>
    <property type="evidence" value="ECO:0007669"/>
    <property type="project" value="UniProtKB-UniRule"/>
</dbReference>
<dbReference type="CDD" id="cd00611">
    <property type="entry name" value="PSAT_like"/>
    <property type="match status" value="1"/>
</dbReference>
<dbReference type="FunFam" id="3.40.640.10:FF:000010">
    <property type="entry name" value="Phosphoserine aminotransferase"/>
    <property type="match status" value="1"/>
</dbReference>
<dbReference type="FunFam" id="3.90.1150.10:FF:000006">
    <property type="entry name" value="Phosphoserine aminotransferase"/>
    <property type="match status" value="1"/>
</dbReference>
<dbReference type="Gene3D" id="3.90.1150.10">
    <property type="entry name" value="Aspartate Aminotransferase, domain 1"/>
    <property type="match status" value="1"/>
</dbReference>
<dbReference type="Gene3D" id="3.40.640.10">
    <property type="entry name" value="Type I PLP-dependent aspartate aminotransferase-like (Major domain)"/>
    <property type="match status" value="1"/>
</dbReference>
<dbReference type="HAMAP" id="MF_00160">
    <property type="entry name" value="SerC_aminotrans_5"/>
    <property type="match status" value="1"/>
</dbReference>
<dbReference type="InterPro" id="IPR000192">
    <property type="entry name" value="Aminotrans_V_dom"/>
</dbReference>
<dbReference type="InterPro" id="IPR020578">
    <property type="entry name" value="Aminotrans_V_PyrdxlP_BS"/>
</dbReference>
<dbReference type="InterPro" id="IPR022278">
    <property type="entry name" value="Pser_aminoTfrase"/>
</dbReference>
<dbReference type="InterPro" id="IPR015424">
    <property type="entry name" value="PyrdxlP-dep_Trfase"/>
</dbReference>
<dbReference type="InterPro" id="IPR015421">
    <property type="entry name" value="PyrdxlP-dep_Trfase_major"/>
</dbReference>
<dbReference type="InterPro" id="IPR015422">
    <property type="entry name" value="PyrdxlP-dep_Trfase_small"/>
</dbReference>
<dbReference type="NCBIfam" id="NF003764">
    <property type="entry name" value="PRK05355.1"/>
    <property type="match status" value="1"/>
</dbReference>
<dbReference type="NCBIfam" id="TIGR01364">
    <property type="entry name" value="serC_1"/>
    <property type="match status" value="1"/>
</dbReference>
<dbReference type="PANTHER" id="PTHR43247">
    <property type="entry name" value="PHOSPHOSERINE AMINOTRANSFERASE"/>
    <property type="match status" value="1"/>
</dbReference>
<dbReference type="PANTHER" id="PTHR43247:SF1">
    <property type="entry name" value="PHOSPHOSERINE AMINOTRANSFERASE"/>
    <property type="match status" value="1"/>
</dbReference>
<dbReference type="Pfam" id="PF00266">
    <property type="entry name" value="Aminotran_5"/>
    <property type="match status" value="1"/>
</dbReference>
<dbReference type="PIRSF" id="PIRSF000525">
    <property type="entry name" value="SerC"/>
    <property type="match status" value="1"/>
</dbReference>
<dbReference type="SUPFAM" id="SSF53383">
    <property type="entry name" value="PLP-dependent transferases"/>
    <property type="match status" value="1"/>
</dbReference>
<dbReference type="PROSITE" id="PS00595">
    <property type="entry name" value="AA_TRANSFER_CLASS_5"/>
    <property type="match status" value="1"/>
</dbReference>